<organism>
    <name type="scientific">Leifsonia xyli subsp. xyli (strain CTCB07)</name>
    <dbReference type="NCBI Taxonomy" id="281090"/>
    <lineage>
        <taxon>Bacteria</taxon>
        <taxon>Bacillati</taxon>
        <taxon>Actinomycetota</taxon>
        <taxon>Actinomycetes</taxon>
        <taxon>Micrococcales</taxon>
        <taxon>Microbacteriaceae</taxon>
        <taxon>Leifsonia</taxon>
    </lineage>
</organism>
<proteinExistence type="inferred from homology"/>
<keyword id="KW-0963">Cytoplasm</keyword>
<keyword id="KW-1185">Reference proteome</keyword>
<keyword id="KW-0694">RNA-binding</keyword>
<accession>Q6AE99</accession>
<feature type="chain" id="PRO_0000163224" description="RNA-binding protein KhpA">
    <location>
        <begin position="1"/>
        <end position="76"/>
    </location>
</feature>
<feature type="domain" description="KH" evidence="1">
    <location>
        <begin position="30"/>
        <end position="76"/>
    </location>
</feature>
<sequence length="76" mass="8191">MLAPALTHVVKGIVDHPDDVRVVAKSSPRGEVLEVRVNPEDLGRVIGRSGRTAKALRTLVTALADGRRVRVDVVDD</sequence>
<reference key="1">
    <citation type="journal article" date="2004" name="Mol. Plant Microbe Interact.">
        <title>The genome sequence of the Gram-positive sugarcane pathogen Leifsonia xyli subsp. xyli.</title>
        <authorList>
            <person name="Monteiro-Vitorello C.B."/>
            <person name="Camargo L.E.A."/>
            <person name="Van Sluys M.A."/>
            <person name="Kitajima J.P."/>
            <person name="Truffi D."/>
            <person name="do Amaral A.M."/>
            <person name="Harakava R."/>
            <person name="de Oliveira J.C.F."/>
            <person name="Wood D."/>
            <person name="de Oliveira M.C."/>
            <person name="Miyaki C.Y."/>
            <person name="Takita M.A."/>
            <person name="da Silva A.C.R."/>
            <person name="Furlan L.R."/>
            <person name="Carraro D.M."/>
            <person name="Camarotte G."/>
            <person name="Almeida N.F. Jr."/>
            <person name="Carrer H."/>
            <person name="Coutinho L.L."/>
            <person name="El-Dorry H.A."/>
            <person name="Ferro M.I.T."/>
            <person name="Gagliardi P.R."/>
            <person name="Giglioti E."/>
            <person name="Goldman M.H.S."/>
            <person name="Goldman G.H."/>
            <person name="Kimura E.T."/>
            <person name="Ferro E.S."/>
            <person name="Kuramae E.E."/>
            <person name="Lemos E.G.M."/>
            <person name="Lemos M.V.F."/>
            <person name="Mauro S.M.Z."/>
            <person name="Machado M.A."/>
            <person name="Marino C.L."/>
            <person name="Menck C.F."/>
            <person name="Nunes L.R."/>
            <person name="Oliveira R.C."/>
            <person name="Pereira G.G."/>
            <person name="Siqueira W."/>
            <person name="de Souza A.A."/>
            <person name="Tsai S.M."/>
            <person name="Zanca A.S."/>
            <person name="Simpson A.J.G."/>
            <person name="Brumbley S.M."/>
            <person name="Setubal J.C."/>
        </authorList>
    </citation>
    <scope>NUCLEOTIDE SEQUENCE [LARGE SCALE GENOMIC DNA]</scope>
    <source>
        <strain>CTCB07</strain>
    </source>
</reference>
<dbReference type="EMBL" id="AE016822">
    <property type="protein sequence ID" value="AAT89297.1"/>
    <property type="molecule type" value="Genomic_DNA"/>
</dbReference>
<dbReference type="RefSeq" id="WP_011186288.1">
    <property type="nucleotide sequence ID" value="NC_006087.1"/>
</dbReference>
<dbReference type="SMR" id="Q6AE99"/>
<dbReference type="STRING" id="281090.Lxx14890"/>
<dbReference type="KEGG" id="lxx:Lxx14890"/>
<dbReference type="eggNOG" id="COG1837">
    <property type="taxonomic scope" value="Bacteria"/>
</dbReference>
<dbReference type="HOGENOM" id="CLU_132074_3_0_11"/>
<dbReference type="Proteomes" id="UP000001306">
    <property type="component" value="Chromosome"/>
</dbReference>
<dbReference type="GO" id="GO:0005737">
    <property type="term" value="C:cytoplasm"/>
    <property type="evidence" value="ECO:0007669"/>
    <property type="project" value="UniProtKB-SubCell"/>
</dbReference>
<dbReference type="GO" id="GO:0003723">
    <property type="term" value="F:RNA binding"/>
    <property type="evidence" value="ECO:0007669"/>
    <property type="project" value="UniProtKB-UniRule"/>
</dbReference>
<dbReference type="CDD" id="cd22533">
    <property type="entry name" value="KH-II_YlqC-like"/>
    <property type="match status" value="1"/>
</dbReference>
<dbReference type="Gene3D" id="3.30.300.20">
    <property type="match status" value="1"/>
</dbReference>
<dbReference type="HAMAP" id="MF_00088">
    <property type="entry name" value="KhpA"/>
    <property type="match status" value="1"/>
</dbReference>
<dbReference type="InterPro" id="IPR015946">
    <property type="entry name" value="KH_dom-like_a/b"/>
</dbReference>
<dbReference type="InterPro" id="IPR009019">
    <property type="entry name" value="KH_sf_prok-type"/>
</dbReference>
<dbReference type="InterPro" id="IPR020627">
    <property type="entry name" value="KhpA"/>
</dbReference>
<dbReference type="NCBIfam" id="NF002761">
    <property type="entry name" value="PRK02821.1"/>
    <property type="match status" value="1"/>
</dbReference>
<dbReference type="PANTHER" id="PTHR34654:SF1">
    <property type="entry name" value="RNA-BINDING PROTEIN KHPA"/>
    <property type="match status" value="1"/>
</dbReference>
<dbReference type="PANTHER" id="PTHR34654">
    <property type="entry name" value="UPF0109 PROTEIN SCO5592"/>
    <property type="match status" value="1"/>
</dbReference>
<dbReference type="Pfam" id="PF13083">
    <property type="entry name" value="KH_KhpA-B"/>
    <property type="match status" value="1"/>
</dbReference>
<dbReference type="SUPFAM" id="SSF54814">
    <property type="entry name" value="Prokaryotic type KH domain (KH-domain type II)"/>
    <property type="match status" value="1"/>
</dbReference>
<dbReference type="PROSITE" id="PS50084">
    <property type="entry name" value="KH_TYPE_1"/>
    <property type="match status" value="1"/>
</dbReference>
<name>KHPA_LEIXX</name>
<gene>
    <name evidence="1" type="primary">khpA</name>
    <name type="ordered locus">Lxx14890</name>
</gene>
<evidence type="ECO:0000255" key="1">
    <source>
        <dbReference type="HAMAP-Rule" id="MF_00088"/>
    </source>
</evidence>
<protein>
    <recommendedName>
        <fullName evidence="1">RNA-binding protein KhpA</fullName>
    </recommendedName>
    <alternativeName>
        <fullName evidence="1">KH-domain protein A</fullName>
    </alternativeName>
</protein>
<comment type="function">
    <text evidence="1">A probable RNA-binding protein.</text>
</comment>
<comment type="subcellular location">
    <subcellularLocation>
        <location evidence="1">Cytoplasm</location>
    </subcellularLocation>
</comment>
<comment type="similarity">
    <text evidence="1">Belongs to the KhpA RNA-binding protein family.</text>
</comment>